<dbReference type="EMBL" id="AF026270">
    <property type="protein sequence ID" value="AAD39017.1"/>
    <property type="molecule type" value="Genomic_DNA"/>
</dbReference>
<dbReference type="EMBL" id="AE006468">
    <property type="protein sequence ID" value="AAL20957.1"/>
    <property type="molecule type" value="Genomic_DNA"/>
</dbReference>
<dbReference type="RefSeq" id="NP_460998.1">
    <property type="nucleotide sequence ID" value="NC_003197.2"/>
</dbReference>
<dbReference type="RefSeq" id="WP_000100782.1">
    <property type="nucleotide sequence ID" value="NC_003197.2"/>
</dbReference>
<dbReference type="SMR" id="Q9XDM9"/>
<dbReference type="IntAct" id="Q9XDM9">
    <property type="interactions" value="1"/>
</dbReference>
<dbReference type="STRING" id="99287.STM2053"/>
<dbReference type="PaxDb" id="99287-STM2053"/>
<dbReference type="GeneID" id="1253574"/>
<dbReference type="KEGG" id="stm:STM2053"/>
<dbReference type="PATRIC" id="fig|99287.12.peg.2175"/>
<dbReference type="HOGENOM" id="CLU_010808_0_0_6"/>
<dbReference type="OMA" id="CTLYACP"/>
<dbReference type="PhylomeDB" id="Q9XDM9"/>
<dbReference type="BioCyc" id="MetaCyc:STM2053-MONOMER"/>
<dbReference type="BioCyc" id="SENT99287:STM2053-MONOMER"/>
<dbReference type="UniPathway" id="UPA00621"/>
<dbReference type="Proteomes" id="UP000001014">
    <property type="component" value="Chromosome"/>
</dbReference>
<dbReference type="GO" id="GO:0016020">
    <property type="term" value="C:membrane"/>
    <property type="evidence" value="ECO:0007669"/>
    <property type="project" value="InterPro"/>
</dbReference>
<dbReference type="GO" id="GO:0031472">
    <property type="term" value="C:propanediol degradation polyhedral organelle"/>
    <property type="evidence" value="ECO:0000314"/>
    <property type="project" value="UniProtKB"/>
</dbReference>
<dbReference type="GO" id="GO:0051539">
    <property type="term" value="F:4 iron, 4 sulfur cluster binding"/>
    <property type="evidence" value="ECO:0007669"/>
    <property type="project" value="UniProtKB-KW"/>
</dbReference>
<dbReference type="GO" id="GO:0009055">
    <property type="term" value="F:electron transfer activity"/>
    <property type="evidence" value="ECO:0007669"/>
    <property type="project" value="InterPro"/>
</dbReference>
<dbReference type="GO" id="GO:0010181">
    <property type="term" value="F:FMN binding"/>
    <property type="evidence" value="ECO:0000314"/>
    <property type="project" value="UniProtKB"/>
</dbReference>
<dbReference type="GO" id="GO:0046872">
    <property type="term" value="F:metal ion binding"/>
    <property type="evidence" value="ECO:0007669"/>
    <property type="project" value="UniProtKB-KW"/>
</dbReference>
<dbReference type="GO" id="GO:0009236">
    <property type="term" value="P:cobalamin biosynthetic process"/>
    <property type="evidence" value="ECO:0007669"/>
    <property type="project" value="UniProtKB-KW"/>
</dbReference>
<dbReference type="GO" id="GO:0051144">
    <property type="term" value="P:propanediol catabolic process"/>
    <property type="evidence" value="ECO:0007669"/>
    <property type="project" value="UniProtKB-UniPathway"/>
</dbReference>
<dbReference type="Gene3D" id="3.10.20.600">
    <property type="match status" value="1"/>
</dbReference>
<dbReference type="Gene3D" id="1.10.1060.10">
    <property type="entry name" value="Alpha-helical ferredoxin"/>
    <property type="match status" value="1"/>
</dbReference>
<dbReference type="Gene3D" id="3.40.50.11540">
    <property type="entry name" value="NADH-ubiquinone oxidoreductase 51kDa subunit"/>
    <property type="match status" value="1"/>
</dbReference>
<dbReference type="InterPro" id="IPR017896">
    <property type="entry name" value="4Fe4S_Fe-S-bd"/>
</dbReference>
<dbReference type="InterPro" id="IPR009051">
    <property type="entry name" value="Helical_ferredxn"/>
</dbReference>
<dbReference type="InterPro" id="IPR010208">
    <property type="entry name" value="Ion_transpt_RnfC/RsxC"/>
</dbReference>
<dbReference type="InterPro" id="IPR011538">
    <property type="entry name" value="Nuo51_FMN-bd"/>
</dbReference>
<dbReference type="InterPro" id="IPR037225">
    <property type="entry name" value="Nuo51_FMN-bd_sf"/>
</dbReference>
<dbReference type="InterPro" id="IPR017054">
    <property type="entry name" value="PduS"/>
</dbReference>
<dbReference type="InterPro" id="IPR026902">
    <property type="entry name" value="RnfC_N"/>
</dbReference>
<dbReference type="InterPro" id="IPR019554">
    <property type="entry name" value="Soluble_ligand-bd"/>
</dbReference>
<dbReference type="PANTHER" id="PTHR43034">
    <property type="entry name" value="ION-TRANSLOCATING OXIDOREDUCTASE COMPLEX SUBUNIT C"/>
    <property type="match status" value="1"/>
</dbReference>
<dbReference type="PANTHER" id="PTHR43034:SF2">
    <property type="entry name" value="ION-TRANSLOCATING OXIDOREDUCTASE COMPLEX SUBUNIT C"/>
    <property type="match status" value="1"/>
</dbReference>
<dbReference type="Pfam" id="PF01512">
    <property type="entry name" value="Complex1_51K"/>
    <property type="match status" value="1"/>
</dbReference>
<dbReference type="Pfam" id="PF13534">
    <property type="entry name" value="Fer4_17"/>
    <property type="match status" value="1"/>
</dbReference>
<dbReference type="Pfam" id="PF13375">
    <property type="entry name" value="RnfC_N"/>
    <property type="match status" value="1"/>
</dbReference>
<dbReference type="Pfam" id="PF10531">
    <property type="entry name" value="SLBB"/>
    <property type="match status" value="1"/>
</dbReference>
<dbReference type="PIRSF" id="PIRSF036408">
    <property type="entry name" value="PduS_prd"/>
    <property type="match status" value="1"/>
</dbReference>
<dbReference type="SUPFAM" id="SSF46548">
    <property type="entry name" value="alpha-helical ferredoxin"/>
    <property type="match status" value="1"/>
</dbReference>
<dbReference type="SUPFAM" id="SSF142019">
    <property type="entry name" value="Nqo1 FMN-binding domain-like"/>
    <property type="match status" value="1"/>
</dbReference>
<dbReference type="SUPFAM" id="SSF142984">
    <property type="entry name" value="Nqo1 middle domain-like"/>
    <property type="match status" value="1"/>
</dbReference>
<dbReference type="PROSITE" id="PS00198">
    <property type="entry name" value="4FE4S_FER_1"/>
    <property type="match status" value="1"/>
</dbReference>
<dbReference type="PROSITE" id="PS51379">
    <property type="entry name" value="4FE4S_FER_2"/>
    <property type="match status" value="2"/>
</dbReference>
<sequence>MSTAINSVEMSLSADEIRERVRAAGVVGAGGAGFPAHVKLQAQVEIFLVNAAECEPMLKVDQQLMWQQAARLVRGVQYAMTATGAREGVIALKEKYRRAIDALTPLLPDGIRLHILPDVYPAGDEVLTIWMATGRRVAPAALPASVGVVVNNVQTVLNIARAVEQRFPVTRRTLTVNGAVARPLTVTVPIGMSLREVLALAGGATVDDPGFINGGPMMGGLITSLDNPVTKTTGGLLVLPKSHPLIQRRMQDERTVLSVARTVCEQCRLCTDLCPRHLIGHELSPHLLVRAVNFHQAATPQLLLSALTCSECNVCESVACPVGISPMRINRMLKRELRAQNQRYEGPLNPADEMAKYRLVPVKRLIAKLGLSPWYQEAPLVEEEPSVEKVTLQLRQHIGASAVANVAVGERVTRGQCVADVPPGALGAPIHASIDGVVSAISEQAITVVRG</sequence>
<accession>Q9XDM9</accession>
<accession>Q7BV74</accession>
<organism>
    <name type="scientific">Salmonella typhimurium (strain LT2 / SGSC1412 / ATCC 700720)</name>
    <dbReference type="NCBI Taxonomy" id="99287"/>
    <lineage>
        <taxon>Bacteria</taxon>
        <taxon>Pseudomonadati</taxon>
        <taxon>Pseudomonadota</taxon>
        <taxon>Gammaproteobacteria</taxon>
        <taxon>Enterobacterales</taxon>
        <taxon>Enterobacteriaceae</taxon>
        <taxon>Salmonella</taxon>
    </lineage>
</organism>
<evidence type="ECO:0000250" key="1">
    <source>
        <dbReference type="UniProtKB" id="B1VB77"/>
    </source>
</evidence>
<evidence type="ECO:0000255" key="2">
    <source>
        <dbReference type="PROSITE-ProRule" id="PRU00711"/>
    </source>
</evidence>
<evidence type="ECO:0000269" key="3">
    <source>
    </source>
</evidence>
<evidence type="ECO:0000269" key="4">
    <source>
    </source>
</evidence>
<evidence type="ECO:0000269" key="5">
    <source>
    </source>
</evidence>
<evidence type="ECO:0000269" key="6">
    <source>
    </source>
</evidence>
<evidence type="ECO:0000303" key="7">
    <source>
    </source>
</evidence>
<evidence type="ECO:0000303" key="8">
    <source>
    </source>
</evidence>
<evidence type="ECO:0000305" key="9"/>
<evidence type="ECO:0000305" key="10">
    <source>
    </source>
</evidence>
<evidence type="ECO:0000305" key="11">
    <source>
    </source>
</evidence>
<evidence type="ECO:0000305" key="12">
    <source>
    </source>
</evidence>
<evidence type="ECO:0000305" key="13">
    <source>
    </source>
</evidence>
<evidence type="ECO:0000305" key="14">
    <source>
    </source>
</evidence>
<proteinExistence type="evidence at protein level"/>
<gene>
    <name evidence="7" type="primary">pduS</name>
    <name type="ordered locus">STM2053</name>
</gene>
<comment type="function">
    <text evidence="5 6 12">A protein that aids in conversion of cob(III)alamin to cob(II)alamin and then to cob(I)alamin in the bacterial microcompartment (BMC) dedicated to 1,2-propanediol (1,2-PD) degradation (PubMed:15817784, PubMed:20656910). The latter step requires PduO. No free cob(I)alamin is released, suggesting a complex is formed with PduO that finishes conversion to adenosylcobalamin. PduS and PduO allow regeneration of the adenosylcobalamin cofactor within the BMC (PubMed:15817784). Another study showed reduction of cob(II)alamin to cob(I)alamin in the absence of PduO. Both reactions require NADH. Cyanocobalamin (CN-Cbl) is not a substrate for the first reaction (PubMed:20656910). Cobalamin reduction probably occurs spontaneously in the presence of free reduced flavin nucleotides, this protein may be involved in electron transfer for this reduction (Probable).</text>
</comment>
<comment type="function">
    <text evidence="14">The 1,2-PD-specific bacterial microcompartment (BMC) concentrates low levels of 1,2-PD catabolic enzymes, concentrates volatile reaction intermediates thus enhancing pathway flux and keeps the level of toxic, mutagenic propionaldehyde low.</text>
</comment>
<comment type="cofactor">
    <cofactor evidence="2 11 13">
        <name>[4Fe-4S] cluster</name>
        <dbReference type="ChEBI" id="CHEBI:49883"/>
    </cofactor>
    <text evidence="1 2">Binds 2 [4Fe-4S] clusters (By similarity). The two centers are coupled but must possess different redox potentials (By similarity).</text>
</comment>
<comment type="cofactor">
    <cofactor evidence="6">
        <name>FMN</name>
        <dbReference type="ChEBI" id="CHEBI:58210"/>
    </cofactor>
    <text evidence="6">Binds one FMN non-covalently per monomer.</text>
</comment>
<comment type="biophysicochemical properties">
    <kinetics>
        <KM evidence="6">10.1 uM for NADH in cob(III)alamin reductase</KM>
        <KM evidence="6">67.5 uM for hydroxycobalamin in cob(III)alamin reductase</KM>
        <KM evidence="6">27.5 uM for NADH in cob(II)alamin reductase</KM>
        <KM evidence="6">72.4 uM for cob(II)alamin in cob(II)alamin reductase</KM>
        <Vmax evidence="6">43.1 mmol/min/mg enzyme for NADH in cob(III)alamin reductase</Vmax>
        <Vmax evidence="6">46.6 mmol/min/mg enzyme for hydroxycobalamin in cob(III)alamin reductase</Vmax>
        <Vmax evidence="6">56.8 nmol/min/mg enzyme for NADH in cob(II)alamin reductase</Vmax>
        <Vmax evidence="6">64.7 nmol/min/mg enzyme for cob(II)alamin in cob(II)alamin reductase</Vmax>
    </kinetics>
    <phDependence>
        <text evidence="6">Optimum pH for cob(III)alamin reductase activity is pH 9.5, no major effect of pH was seen on cob(II)alamin reductase activity between pH 7-10.</text>
    </phDependence>
    <temperatureDependence>
        <text evidence="6">Optimum temperature is 37 degrees Celsius for cob(III)alamin reductase and 42 degrees Celsius for cob(II)alamin reductase.</text>
    </temperatureDependence>
</comment>
<comment type="pathway">
    <text evidence="10">Polyol metabolism; 1,2-propanediol degradation.</text>
</comment>
<comment type="subunit">
    <text evidence="1 5 6">Monomeric when purified anaerobically, dimeric under aerobic conditions (PubMed:20656910). Forms a complex with PduO (PubMed:15817784, PubMed:20656910). Interacts with PduT, probably via the N-terminus of PduS (By similarity).</text>
</comment>
<comment type="subcellular location">
    <subcellularLocation>
        <location evidence="6">Bacterial microcompartment</location>
    </subcellularLocation>
</comment>
<comment type="induction">
    <text evidence="3">BMC production is induced by growth on 1,2-PD vitamin B12 medium.</text>
</comment>
<comment type="disruption phenotype">
    <text evidence="6">Grows more slowly and to a lower cell density than wild-type.</text>
</comment>
<comment type="miscellaneous">
    <text evidence="3 4">Bacterial microcompartments (BMC) 100-200 nm in cross section are formed during aerobic growth on minimal 1,2-PD-B12 or anaerobic growth on 1,2-PD-tetrathionate medium, but not during aerobic growth on glucose, anerobic growth on glucose or pyruvate-tetrathionate (PubMed:10498708). BMCs can constitute up to 10% of total cell protein (PubMed:12923081).</text>
</comment>
<comment type="similarity">
    <text evidence="9">Belongs to the PduS cobalamin reductase family.</text>
</comment>
<protein>
    <recommendedName>
        <fullName evidence="8">Cobalamin reductase PduS</fullName>
    </recommendedName>
    <alternativeName>
        <fullName>Propanediol utilization protein PduS</fullName>
    </alternativeName>
</protein>
<feature type="chain" id="PRO_0000454284" description="Cobalamin reductase PduS">
    <location>
        <begin position="1"/>
        <end position="451"/>
    </location>
</feature>
<feature type="domain" description="4Fe-4S ferredoxin-type 1" evidence="2">
    <location>
        <begin position="255"/>
        <end position="284"/>
    </location>
</feature>
<feature type="domain" description="4Fe-4S ferredoxin-type 2" evidence="2">
    <location>
        <begin position="300"/>
        <end position="330"/>
    </location>
</feature>
<feature type="binding site" evidence="2">
    <location>
        <position position="264"/>
    </location>
    <ligand>
        <name>[4Fe-4S] cluster</name>
        <dbReference type="ChEBI" id="CHEBI:49883"/>
        <label>1</label>
    </ligand>
</feature>
<feature type="binding site" evidence="2">
    <location>
        <position position="267"/>
    </location>
    <ligand>
        <name>[4Fe-4S] cluster</name>
        <dbReference type="ChEBI" id="CHEBI:49883"/>
        <label>1</label>
    </ligand>
</feature>
<feature type="binding site" evidence="2">
    <location>
        <position position="270"/>
    </location>
    <ligand>
        <name>[4Fe-4S] cluster</name>
        <dbReference type="ChEBI" id="CHEBI:49883"/>
        <label>1</label>
    </ligand>
</feature>
<feature type="binding site" evidence="2">
    <location>
        <position position="274"/>
    </location>
    <ligand>
        <name>[4Fe-4S] cluster</name>
        <dbReference type="ChEBI" id="CHEBI:49883"/>
        <label>1</label>
    </ligand>
</feature>
<feature type="binding site" evidence="2">
    <location>
        <position position="309"/>
    </location>
    <ligand>
        <name>[4Fe-4S] cluster</name>
        <dbReference type="ChEBI" id="CHEBI:49883"/>
        <label>2</label>
    </ligand>
</feature>
<feature type="binding site" evidence="2">
    <location>
        <position position="312"/>
    </location>
    <ligand>
        <name>[4Fe-4S] cluster</name>
        <dbReference type="ChEBI" id="CHEBI:49883"/>
        <label>2</label>
    </ligand>
</feature>
<feature type="binding site" evidence="2">
    <location>
        <position position="315"/>
    </location>
    <ligand>
        <name>[4Fe-4S] cluster</name>
        <dbReference type="ChEBI" id="CHEBI:49883"/>
        <label>2</label>
    </ligand>
</feature>
<feature type="binding site" evidence="2">
    <location>
        <position position="320"/>
    </location>
    <ligand>
        <name>[4Fe-4S] cluster</name>
        <dbReference type="ChEBI" id="CHEBI:49883"/>
        <label>2</label>
    </ligand>
</feature>
<name>PDUS_SALTY</name>
<keyword id="KW-0004">4Fe-4S</keyword>
<keyword id="KW-1283">Bacterial microcompartment</keyword>
<keyword id="KW-0169">Cobalamin biosynthesis</keyword>
<keyword id="KW-0903">Direct protein sequencing</keyword>
<keyword id="KW-0249">Electron transport</keyword>
<keyword id="KW-0285">Flavoprotein</keyword>
<keyword id="KW-0288">FMN</keyword>
<keyword id="KW-0408">Iron</keyword>
<keyword id="KW-0411">Iron-sulfur</keyword>
<keyword id="KW-0479">Metal-binding</keyword>
<keyword id="KW-0520">NAD</keyword>
<keyword id="KW-1185">Reference proteome</keyword>
<keyword id="KW-0677">Repeat</keyword>
<keyword id="KW-0813">Transport</keyword>
<reference key="1">
    <citation type="journal article" date="1999" name="J. Bacteriol.">
        <title>The propanediol utilization (pdu) operon of Salmonella enterica serovar typhimurium LT2 includes genes necessary for formation of polyhedral organelles involved in coenzyme B(12)-dependent 1, 2-propanediol degradation.</title>
        <authorList>
            <person name="Bobik T.A."/>
            <person name="Havemann G.D."/>
            <person name="Busch R.J."/>
            <person name="Williams D.S."/>
            <person name="Aldrich H.C."/>
        </authorList>
    </citation>
    <scope>NUCLEOTIDE SEQUENCE [GENOMIC DNA]</scope>
    <scope>PATHWAY</scope>
    <scope>INDUCTION</scope>
    <source>
        <strain>LT2</strain>
    </source>
</reference>
<reference key="2">
    <citation type="journal article" date="2001" name="Nature">
        <title>Complete genome sequence of Salmonella enterica serovar Typhimurium LT2.</title>
        <authorList>
            <person name="McClelland M."/>
            <person name="Sanderson K.E."/>
            <person name="Spieth J."/>
            <person name="Clifton S.W."/>
            <person name="Latreille P."/>
            <person name="Courtney L."/>
            <person name="Porwollik S."/>
            <person name="Ali J."/>
            <person name="Dante M."/>
            <person name="Du F."/>
            <person name="Hou S."/>
            <person name="Layman D."/>
            <person name="Leonard S."/>
            <person name="Nguyen C."/>
            <person name="Scott K."/>
            <person name="Holmes A."/>
            <person name="Grewal N."/>
            <person name="Mulvaney E."/>
            <person name="Ryan E."/>
            <person name="Sun H."/>
            <person name="Florea L."/>
            <person name="Miller W."/>
            <person name="Stoneking T."/>
            <person name="Nhan M."/>
            <person name="Waterston R."/>
            <person name="Wilson R.K."/>
        </authorList>
    </citation>
    <scope>NUCLEOTIDE SEQUENCE [LARGE SCALE GENOMIC DNA]</scope>
    <source>
        <strain>LT2 / SGSC1412 / ATCC 700720</strain>
    </source>
</reference>
<reference key="3">
    <citation type="journal article" date="2010" name="J. Bacteriol.">
        <title>Characterization of the PduS cobalamin reductase of Salmonella enterica and its role in the Pdu microcompartment.</title>
        <authorList>
            <person name="Cheng S."/>
            <person name="Bobik T.A."/>
        </authorList>
    </citation>
    <scope>PROTEIN SEQUENCE OF 59-72; 98-113; 241-249; 276-291 AND 395-412</scope>
    <scope>FUNCTION</scope>
    <scope>FMN COFACTOR</scope>
    <scope>FE-S COFACTOR</scope>
    <scope>BIOPHYSICOCHEMICAL PROPERTIES</scope>
    <scope>SUBUNIT</scope>
    <scope>INTERACTION WITH PDUO</scope>
    <scope>SUBCELLULAR LOCATION</scope>
    <scope>DISRUPTION PHENOTYPE</scope>
    <source>
        <strain>LT2</strain>
    </source>
</reference>
<reference key="4">
    <citation type="journal article" date="2003" name="J. Bacteriol.">
        <title>Protein content of polyhedral organelles involved in coenzyme B12-dependent degradation of 1,2-propanediol in Salmonella enterica serovar Typhimurium LT2.</title>
        <authorList>
            <person name="Havemann G.D."/>
            <person name="Bobik T.A."/>
        </authorList>
    </citation>
    <scope>BACTERIAL MICROCOMPARTMENT ABUNDANCE</scope>
    <source>
        <strain>LT2</strain>
    </source>
</reference>
<reference key="5">
    <citation type="journal article" date="2005" name="Microbiology">
        <title>Biochemical evidence that the pduS gene encodes a bifunctional cobalamin reductase.</title>
        <authorList>
            <person name="Sampson E.M."/>
            <person name="Johnson C.L.V."/>
            <person name="Bobik T.A."/>
        </authorList>
    </citation>
    <scope>FUNCTION</scope>
    <scope>FE-S COFACTOR</scope>
    <scope>SUBUNIT</scope>
    <source>
        <strain>LT2</strain>
    </source>
</reference>
<reference key="6">
    <citation type="journal article" date="2010" name="J. Biol. Chem.">
        <title>Dihydroflavin-driven adenosylation of 4-coordinate Co(II) corrinoids: are cobalamin reductases enzymes or electron transfer proteins?</title>
        <authorList>
            <person name="Mera P.E."/>
            <person name="Escalante-Semerena J.C."/>
        </authorList>
    </citation>
    <scope>POSSIBLE REACTION MECHANISM</scope>
    <scope>POSSIBLE FLAVIN COFACTOR</scope>
    <source>
        <strain>TR6583</strain>
    </source>
</reference>
<reference key="7">
    <citation type="journal article" date="2017" name="PLoS Comput. Biol.">
        <title>A systems-level model reveals that 1,2-Propanediol utilization microcompartments enhance pathway flux through intermediate sequestration.</title>
        <authorList>
            <person name="Jakobson C.M."/>
            <person name="Tullman-Ercek D."/>
            <person name="Slininger M.F."/>
            <person name="Mangan N.M."/>
        </authorList>
    </citation>
    <scope>SYSTEM-MODELING</scope>
    <scope>FUNCTION</scope>
    <source>
        <strain>LT2</strain>
    </source>
</reference>